<gene>
    <name evidence="2" type="primary">rbcL</name>
</gene>
<name>RBL_ARAHI</name>
<dbReference type="EC" id="4.1.1.39" evidence="2"/>
<dbReference type="EMBL" id="AP009369">
    <property type="protein sequence ID" value="BAF50031.1"/>
    <property type="molecule type" value="Genomic_DNA"/>
</dbReference>
<dbReference type="RefSeq" id="YP_001123207.1">
    <property type="nucleotide sequence ID" value="NC_009268.1"/>
</dbReference>
<dbReference type="SMR" id="A4QK26"/>
<dbReference type="GeneID" id="4962604"/>
<dbReference type="GO" id="GO:0009507">
    <property type="term" value="C:chloroplast"/>
    <property type="evidence" value="ECO:0007669"/>
    <property type="project" value="UniProtKB-SubCell"/>
</dbReference>
<dbReference type="GO" id="GO:0000287">
    <property type="term" value="F:magnesium ion binding"/>
    <property type="evidence" value="ECO:0007669"/>
    <property type="project" value="UniProtKB-UniRule"/>
</dbReference>
<dbReference type="GO" id="GO:0004497">
    <property type="term" value="F:monooxygenase activity"/>
    <property type="evidence" value="ECO:0007669"/>
    <property type="project" value="UniProtKB-KW"/>
</dbReference>
<dbReference type="GO" id="GO:0016984">
    <property type="term" value="F:ribulose-bisphosphate carboxylase activity"/>
    <property type="evidence" value="ECO:0007669"/>
    <property type="project" value="UniProtKB-UniRule"/>
</dbReference>
<dbReference type="GO" id="GO:0009853">
    <property type="term" value="P:photorespiration"/>
    <property type="evidence" value="ECO:0007669"/>
    <property type="project" value="UniProtKB-KW"/>
</dbReference>
<dbReference type="GO" id="GO:0019253">
    <property type="term" value="P:reductive pentose-phosphate cycle"/>
    <property type="evidence" value="ECO:0007669"/>
    <property type="project" value="UniProtKB-UniRule"/>
</dbReference>
<dbReference type="CDD" id="cd08212">
    <property type="entry name" value="RuBisCO_large_I"/>
    <property type="match status" value="1"/>
</dbReference>
<dbReference type="FunFam" id="3.20.20.110:FF:000001">
    <property type="entry name" value="Ribulose bisphosphate carboxylase large chain"/>
    <property type="match status" value="1"/>
</dbReference>
<dbReference type="FunFam" id="3.30.70.150:FF:000001">
    <property type="entry name" value="Ribulose bisphosphate carboxylase large chain"/>
    <property type="match status" value="1"/>
</dbReference>
<dbReference type="Gene3D" id="3.20.20.110">
    <property type="entry name" value="Ribulose bisphosphate carboxylase, large subunit, C-terminal domain"/>
    <property type="match status" value="1"/>
</dbReference>
<dbReference type="Gene3D" id="3.30.70.150">
    <property type="entry name" value="RuBisCO large subunit, N-terminal domain"/>
    <property type="match status" value="1"/>
</dbReference>
<dbReference type="HAMAP" id="MF_01338">
    <property type="entry name" value="RuBisCO_L_type1"/>
    <property type="match status" value="1"/>
</dbReference>
<dbReference type="InterPro" id="IPR033966">
    <property type="entry name" value="RuBisCO"/>
</dbReference>
<dbReference type="InterPro" id="IPR020878">
    <property type="entry name" value="RuBisCo_large_chain_AS"/>
</dbReference>
<dbReference type="InterPro" id="IPR000685">
    <property type="entry name" value="RuBisCO_lsu_C"/>
</dbReference>
<dbReference type="InterPro" id="IPR036376">
    <property type="entry name" value="RuBisCO_lsu_C_sf"/>
</dbReference>
<dbReference type="InterPro" id="IPR017443">
    <property type="entry name" value="RuBisCO_lsu_fd_N"/>
</dbReference>
<dbReference type="InterPro" id="IPR036422">
    <property type="entry name" value="RuBisCO_lsu_N_sf"/>
</dbReference>
<dbReference type="InterPro" id="IPR020888">
    <property type="entry name" value="RuBisCO_lsuI"/>
</dbReference>
<dbReference type="NCBIfam" id="NF003252">
    <property type="entry name" value="PRK04208.1"/>
    <property type="match status" value="1"/>
</dbReference>
<dbReference type="PANTHER" id="PTHR42704">
    <property type="entry name" value="RIBULOSE BISPHOSPHATE CARBOXYLASE"/>
    <property type="match status" value="1"/>
</dbReference>
<dbReference type="PANTHER" id="PTHR42704:SF16">
    <property type="entry name" value="RIBULOSE BISPHOSPHATE CARBOXYLASE LARGE CHAIN"/>
    <property type="match status" value="1"/>
</dbReference>
<dbReference type="Pfam" id="PF00016">
    <property type="entry name" value="RuBisCO_large"/>
    <property type="match status" value="1"/>
</dbReference>
<dbReference type="Pfam" id="PF02788">
    <property type="entry name" value="RuBisCO_large_N"/>
    <property type="match status" value="1"/>
</dbReference>
<dbReference type="SFLD" id="SFLDG01052">
    <property type="entry name" value="RuBisCO"/>
    <property type="match status" value="1"/>
</dbReference>
<dbReference type="SFLD" id="SFLDS00014">
    <property type="entry name" value="RuBisCO"/>
    <property type="match status" value="1"/>
</dbReference>
<dbReference type="SFLD" id="SFLDG00301">
    <property type="entry name" value="RuBisCO-like_proteins"/>
    <property type="match status" value="1"/>
</dbReference>
<dbReference type="SUPFAM" id="SSF51649">
    <property type="entry name" value="RuBisCo, C-terminal domain"/>
    <property type="match status" value="1"/>
</dbReference>
<dbReference type="SUPFAM" id="SSF54966">
    <property type="entry name" value="RuBisCO, large subunit, small (N-terminal) domain"/>
    <property type="match status" value="1"/>
</dbReference>
<dbReference type="PROSITE" id="PS00157">
    <property type="entry name" value="RUBISCO_LARGE"/>
    <property type="match status" value="1"/>
</dbReference>
<evidence type="ECO:0000250" key="1">
    <source>
        <dbReference type="UniProtKB" id="O03042"/>
    </source>
</evidence>
<evidence type="ECO:0000255" key="2">
    <source>
        <dbReference type="HAMAP-Rule" id="MF_01338"/>
    </source>
</evidence>
<reference key="1">
    <citation type="submission" date="2007-03" db="EMBL/GenBank/DDBJ databases">
        <title>Sequencing analysis of Arabis hirsuta chloroplast DNA.</title>
        <authorList>
            <person name="Hosouchi T."/>
            <person name="Tsuruoka H."/>
            <person name="Kotani H."/>
        </authorList>
    </citation>
    <scope>NUCLEOTIDE SEQUENCE [LARGE SCALE GENOMIC DNA]</scope>
</reference>
<sequence>MSPQTETKASVGFKAGVKEYKLTYYTPEYETKDTDILAAFRVTPQPGVPPEEAGAAVAAESSTGTWTTVWTDGLTSLDRYKGRCYHIEPVPGEETQFIAYVAYPLDLFEEGSVTNMFTSIVGNVFGFKALAALRLEDLRIPPAYTKTFQGPPHGIQVERDKLNKYGRPLLGCTIKPKLGLSAKNYGRAVYECLRGGLDFTKDDENVNSQPFMRWRDRFLFCAEAIYKSQAETGEIKGHYLNATAGTCEEMIKRAVFARELGVPIVMHDYLTGGFTANTSLAHYCRDNGLLLHIHRAMHAVIDRQKNHGMHFRVLAKALRLSGGDHVHAGTVVGKLEGDRESTLGFVDLLRDDYVEKDRSRGIFFTQDWVSLPGVLPVASGGIHVWHMPALTEIFGDDSVLQFGGGTLGHPWGNAPGAVANRVALEACVQARNEGRDLAVEGNEIIREACKWSPELAAACEVWKEIRFNFPTVDKLDGQE</sequence>
<geneLocation type="chloroplast"/>
<accession>A4QK26</accession>
<comment type="function">
    <text evidence="2">RuBisCO catalyzes two reactions: the carboxylation of D-ribulose 1,5-bisphosphate, the primary event in carbon dioxide fixation, as well as the oxidative fragmentation of the pentose substrate in the photorespiration process. Both reactions occur simultaneously and in competition at the same active site.</text>
</comment>
<comment type="catalytic activity">
    <reaction evidence="2">
        <text>2 (2R)-3-phosphoglycerate + 2 H(+) = D-ribulose 1,5-bisphosphate + CO2 + H2O</text>
        <dbReference type="Rhea" id="RHEA:23124"/>
        <dbReference type="ChEBI" id="CHEBI:15377"/>
        <dbReference type="ChEBI" id="CHEBI:15378"/>
        <dbReference type="ChEBI" id="CHEBI:16526"/>
        <dbReference type="ChEBI" id="CHEBI:57870"/>
        <dbReference type="ChEBI" id="CHEBI:58272"/>
        <dbReference type="EC" id="4.1.1.39"/>
    </reaction>
</comment>
<comment type="catalytic activity">
    <reaction evidence="2">
        <text>D-ribulose 1,5-bisphosphate + O2 = 2-phosphoglycolate + (2R)-3-phosphoglycerate + 2 H(+)</text>
        <dbReference type="Rhea" id="RHEA:36631"/>
        <dbReference type="ChEBI" id="CHEBI:15378"/>
        <dbReference type="ChEBI" id="CHEBI:15379"/>
        <dbReference type="ChEBI" id="CHEBI:57870"/>
        <dbReference type="ChEBI" id="CHEBI:58033"/>
        <dbReference type="ChEBI" id="CHEBI:58272"/>
    </reaction>
</comment>
<comment type="cofactor">
    <cofactor evidence="2">
        <name>Mg(2+)</name>
        <dbReference type="ChEBI" id="CHEBI:18420"/>
    </cofactor>
    <text evidence="2">Binds 1 Mg(2+) ion per subunit.</text>
</comment>
<comment type="subunit">
    <text evidence="2">Heterohexadecamer of 8 large chains and 8 small chains; disulfide-linked. The disulfide link is formed within the large subunit homodimers.</text>
</comment>
<comment type="subcellular location">
    <subcellularLocation>
        <location>Plastid</location>
        <location>Chloroplast</location>
    </subcellularLocation>
</comment>
<comment type="PTM">
    <text evidence="2">The disulfide bond which can form in the large chain dimeric partners within the hexadecamer appears to be associated with oxidative stress and protein turnover.</text>
</comment>
<comment type="miscellaneous">
    <text evidence="2">The basic functional RuBisCO is composed of a large chain homodimer in a 'head-to-tail' conformation. In form I RuBisCO this homodimer is arranged in a barrel-like tetramer with the small subunits forming a tetrameric 'cap' on each end of the 'barrel'.</text>
</comment>
<comment type="similarity">
    <text evidence="2">Belongs to the RuBisCO large chain family. Type I subfamily.</text>
</comment>
<proteinExistence type="inferred from homology"/>
<keyword id="KW-0113">Calvin cycle</keyword>
<keyword id="KW-0120">Carbon dioxide fixation</keyword>
<keyword id="KW-0150">Chloroplast</keyword>
<keyword id="KW-1015">Disulfide bond</keyword>
<keyword id="KW-0456">Lyase</keyword>
<keyword id="KW-0460">Magnesium</keyword>
<keyword id="KW-0479">Metal-binding</keyword>
<keyword id="KW-0503">Monooxygenase</keyword>
<keyword id="KW-0560">Oxidoreductase</keyword>
<keyword id="KW-0597">Phosphoprotein</keyword>
<keyword id="KW-0601">Photorespiration</keyword>
<keyword id="KW-0602">Photosynthesis</keyword>
<keyword id="KW-0934">Plastid</keyword>
<feature type="propeptide" id="PRO_0000299983" evidence="2">
    <location>
        <begin position="1"/>
        <end position="2"/>
    </location>
</feature>
<feature type="chain" id="PRO_0000299984" description="Ribulose bisphosphate carboxylase large chain">
    <location>
        <begin position="3"/>
        <end position="479"/>
    </location>
</feature>
<feature type="active site" description="Proton acceptor" evidence="2">
    <location>
        <position position="175"/>
    </location>
</feature>
<feature type="active site" description="Proton acceptor" evidence="2">
    <location>
        <position position="294"/>
    </location>
</feature>
<feature type="binding site" description="in homodimeric partner" evidence="2">
    <location>
        <position position="123"/>
    </location>
    <ligand>
        <name>substrate</name>
    </ligand>
</feature>
<feature type="binding site" evidence="2">
    <location>
        <position position="173"/>
    </location>
    <ligand>
        <name>substrate</name>
    </ligand>
</feature>
<feature type="binding site" evidence="2">
    <location>
        <position position="177"/>
    </location>
    <ligand>
        <name>substrate</name>
    </ligand>
</feature>
<feature type="binding site" description="via carbamate group" evidence="2">
    <location>
        <position position="201"/>
    </location>
    <ligand>
        <name>Mg(2+)</name>
        <dbReference type="ChEBI" id="CHEBI:18420"/>
    </ligand>
</feature>
<feature type="binding site" evidence="2">
    <location>
        <position position="203"/>
    </location>
    <ligand>
        <name>Mg(2+)</name>
        <dbReference type="ChEBI" id="CHEBI:18420"/>
    </ligand>
</feature>
<feature type="binding site" evidence="2">
    <location>
        <position position="204"/>
    </location>
    <ligand>
        <name>Mg(2+)</name>
        <dbReference type="ChEBI" id="CHEBI:18420"/>
    </ligand>
</feature>
<feature type="binding site" evidence="2">
    <location>
        <position position="295"/>
    </location>
    <ligand>
        <name>substrate</name>
    </ligand>
</feature>
<feature type="binding site" evidence="2">
    <location>
        <position position="327"/>
    </location>
    <ligand>
        <name>substrate</name>
    </ligand>
</feature>
<feature type="binding site" evidence="2">
    <location>
        <position position="379"/>
    </location>
    <ligand>
        <name>substrate</name>
    </ligand>
</feature>
<feature type="site" description="Transition state stabilizer" evidence="2">
    <location>
        <position position="334"/>
    </location>
</feature>
<feature type="modified residue" description="N6-carboxylysine" evidence="2">
    <location>
        <position position="201"/>
    </location>
</feature>
<feature type="modified residue" description="Phosphoserine" evidence="1">
    <location>
        <position position="208"/>
    </location>
</feature>
<feature type="modified residue" description="Phosphothreonine" evidence="1">
    <location>
        <position position="330"/>
    </location>
</feature>
<feature type="disulfide bond" description="Interchain; in linked form" evidence="2">
    <location>
        <position position="247"/>
    </location>
</feature>
<organism>
    <name type="scientific">Arabis hirsuta</name>
    <name type="common">Hairy rock-cress</name>
    <name type="synonym">Turritis hirsuta</name>
    <dbReference type="NCBI Taxonomy" id="78191"/>
    <lineage>
        <taxon>Eukaryota</taxon>
        <taxon>Viridiplantae</taxon>
        <taxon>Streptophyta</taxon>
        <taxon>Embryophyta</taxon>
        <taxon>Tracheophyta</taxon>
        <taxon>Spermatophyta</taxon>
        <taxon>Magnoliopsida</taxon>
        <taxon>eudicotyledons</taxon>
        <taxon>Gunneridae</taxon>
        <taxon>Pentapetalae</taxon>
        <taxon>rosids</taxon>
        <taxon>malvids</taxon>
        <taxon>Brassicales</taxon>
        <taxon>Brassicaceae</taxon>
        <taxon>Arabideae</taxon>
        <taxon>Arabis</taxon>
    </lineage>
</organism>
<protein>
    <recommendedName>
        <fullName evidence="2">Ribulose bisphosphate carboxylase large chain</fullName>
        <shortName evidence="2">RuBisCO large subunit</shortName>
        <ecNumber evidence="2">4.1.1.39</ecNumber>
    </recommendedName>
</protein>